<dbReference type="EC" id="6.1.1.1"/>
<dbReference type="EMBL" id="ACOL01000006">
    <property type="protein sequence ID" value="EEQ83027.1"/>
    <property type="molecule type" value="Genomic_DNA"/>
</dbReference>
<dbReference type="RefSeq" id="XP_002996698.1">
    <property type="nucleotide sequence ID" value="XM_002996652.1"/>
</dbReference>
<dbReference type="SMR" id="C4V6W1"/>
<dbReference type="FunCoup" id="C4V6W1">
    <property type="interactions" value="197"/>
</dbReference>
<dbReference type="STRING" id="578460.C4V6W1"/>
<dbReference type="KEGG" id="nce:NCER_100158"/>
<dbReference type="VEuPathDB" id="MicrosporidiaDB:NCER_100158"/>
<dbReference type="HOGENOM" id="CLU_035267_0_1_1"/>
<dbReference type="InParanoid" id="C4V6W1"/>
<dbReference type="OMA" id="VMPKLGY"/>
<dbReference type="OrthoDB" id="1738at6029"/>
<dbReference type="Proteomes" id="UP000009082">
    <property type="component" value="Unassembled WGS sequence"/>
</dbReference>
<dbReference type="GO" id="GO:0005737">
    <property type="term" value="C:cytoplasm"/>
    <property type="evidence" value="ECO:0007669"/>
    <property type="project" value="UniProtKB-SubCell"/>
</dbReference>
<dbReference type="GO" id="GO:0005524">
    <property type="term" value="F:ATP binding"/>
    <property type="evidence" value="ECO:0007669"/>
    <property type="project" value="UniProtKB-KW"/>
</dbReference>
<dbReference type="GO" id="GO:0004831">
    <property type="term" value="F:tyrosine-tRNA ligase activity"/>
    <property type="evidence" value="ECO:0007669"/>
    <property type="project" value="UniProtKB-EC"/>
</dbReference>
<dbReference type="GO" id="GO:0006437">
    <property type="term" value="P:tyrosyl-tRNA aminoacylation"/>
    <property type="evidence" value="ECO:0007669"/>
    <property type="project" value="InterPro"/>
</dbReference>
<dbReference type="FunFam" id="3.40.50.620:FF:000040">
    <property type="entry name" value="Tyrosine--tRNA ligase"/>
    <property type="match status" value="1"/>
</dbReference>
<dbReference type="Gene3D" id="3.40.50.620">
    <property type="entry name" value="HUPs"/>
    <property type="match status" value="1"/>
</dbReference>
<dbReference type="Gene3D" id="1.10.240.10">
    <property type="entry name" value="Tyrosyl-Transfer RNA Synthetase"/>
    <property type="match status" value="1"/>
</dbReference>
<dbReference type="InterPro" id="IPR002305">
    <property type="entry name" value="aa-tRNA-synth_Ic"/>
</dbReference>
<dbReference type="InterPro" id="IPR014729">
    <property type="entry name" value="Rossmann-like_a/b/a_fold"/>
</dbReference>
<dbReference type="InterPro" id="IPR002307">
    <property type="entry name" value="Tyr-tRNA-ligase"/>
</dbReference>
<dbReference type="InterPro" id="IPR023617">
    <property type="entry name" value="Tyr-tRNA-ligase_arc/euk-type"/>
</dbReference>
<dbReference type="InterPro" id="IPR050489">
    <property type="entry name" value="Tyr-tRNA_synthase"/>
</dbReference>
<dbReference type="NCBIfam" id="NF006330">
    <property type="entry name" value="PRK08560.1"/>
    <property type="match status" value="1"/>
</dbReference>
<dbReference type="NCBIfam" id="TIGR00234">
    <property type="entry name" value="tyrS"/>
    <property type="match status" value="1"/>
</dbReference>
<dbReference type="PANTHER" id="PTHR46264:SF4">
    <property type="entry name" value="TYROSINE--TRNA LIGASE, CYTOPLASMIC"/>
    <property type="match status" value="1"/>
</dbReference>
<dbReference type="PANTHER" id="PTHR46264">
    <property type="entry name" value="TYROSINE-TRNA LIGASE"/>
    <property type="match status" value="1"/>
</dbReference>
<dbReference type="Pfam" id="PF00579">
    <property type="entry name" value="tRNA-synt_1b"/>
    <property type="match status" value="1"/>
</dbReference>
<dbReference type="PIRSF" id="PIRSF006588">
    <property type="entry name" value="TyrRS_arch_euk"/>
    <property type="match status" value="1"/>
</dbReference>
<dbReference type="PRINTS" id="PR01040">
    <property type="entry name" value="TRNASYNTHTYR"/>
</dbReference>
<dbReference type="SUPFAM" id="SSF52374">
    <property type="entry name" value="Nucleotidylyl transferase"/>
    <property type="match status" value="1"/>
</dbReference>
<proteinExistence type="inferred from homology"/>
<gene>
    <name type="ORF">NCER_100158</name>
</gene>
<comment type="catalytic activity">
    <reaction>
        <text>tRNA(Tyr) + L-tyrosine + ATP = L-tyrosyl-tRNA(Tyr) + AMP + diphosphate + H(+)</text>
        <dbReference type="Rhea" id="RHEA:10220"/>
        <dbReference type="Rhea" id="RHEA-COMP:9706"/>
        <dbReference type="Rhea" id="RHEA-COMP:9707"/>
        <dbReference type="ChEBI" id="CHEBI:15378"/>
        <dbReference type="ChEBI" id="CHEBI:30616"/>
        <dbReference type="ChEBI" id="CHEBI:33019"/>
        <dbReference type="ChEBI" id="CHEBI:58315"/>
        <dbReference type="ChEBI" id="CHEBI:78442"/>
        <dbReference type="ChEBI" id="CHEBI:78536"/>
        <dbReference type="ChEBI" id="CHEBI:456215"/>
        <dbReference type="EC" id="6.1.1.1"/>
    </reaction>
</comment>
<comment type="subunit">
    <text evidence="1">Homodimer.</text>
</comment>
<comment type="subcellular location">
    <subcellularLocation>
        <location evidence="1">Cytoplasm</location>
    </subcellularLocation>
</comment>
<comment type="similarity">
    <text evidence="2">Belongs to the class-I aminoacyl-tRNA synthetase family.</text>
</comment>
<reference key="1">
    <citation type="journal article" date="2009" name="PLoS Pathog.">
        <title>Genomic analyses of the microsporidian Nosema ceranae, an emergent pathogen of honey bees.</title>
        <authorList>
            <person name="Cornman R.S."/>
            <person name="Chen Y.P."/>
            <person name="Schatz M.C."/>
            <person name="Street C."/>
            <person name="Zhao Y."/>
            <person name="Desany B."/>
            <person name="Egholm M."/>
            <person name="Hutchison S."/>
            <person name="Pettis J.S."/>
            <person name="Lipkin W.I."/>
            <person name="Evans J.D."/>
        </authorList>
    </citation>
    <scope>NUCLEOTIDE SEQUENCE [LARGE SCALE GENOMIC DNA]</scope>
    <source>
        <strain>BRL01</strain>
    </source>
</reference>
<sequence>MDTTEKLKLINRNLKEVIGGDIMEKIINKRDLNVYWGTATTGKPHIAYFLPILKIKDFVDAGCNVTILLADIHAFLDNLKAPIEKIECRSQYYKKIITLMLKSIKVDVSKISFIFGSEYQKSNKYFTDILRILNQTKKNDARRAGSEVVKQVKNSKLSSLVYPAMQALDEEYLNVDVQFGGIDQRKIFMYAREFLPLLKYKKRIHLMNPMIPGLNSDKMSSSDIDSKIDLLDTKLEIYKKIHNCSLENEGLIFLFKSIIYPYCSIFNLQIMISGKVYTFDKLYEDIKMKIIDETELKNIASDMIERLICPIRDEMLRDLKLIENAYGNK</sequence>
<feature type="chain" id="PRO_0000388401" description="Probable tyrosine--tRNA ligase, cytoplasmic">
    <location>
        <begin position="1"/>
        <end position="329"/>
    </location>
</feature>
<feature type="short sequence motif" description="'HIGH' region" evidence="1">
    <location>
        <begin position="40"/>
        <end position="48"/>
    </location>
</feature>
<feature type="short sequence motif" description="'KMSKS' region" evidence="1">
    <location>
        <begin position="218"/>
        <end position="222"/>
    </location>
</feature>
<feature type="binding site" evidence="1">
    <location>
        <position position="35"/>
    </location>
    <ligand>
        <name>L-tyrosine</name>
        <dbReference type="ChEBI" id="CHEBI:58315"/>
    </ligand>
</feature>
<feature type="binding site" evidence="1">
    <location>
        <position position="162"/>
    </location>
    <ligand>
        <name>L-tyrosine</name>
        <dbReference type="ChEBI" id="CHEBI:58315"/>
    </ligand>
</feature>
<feature type="binding site" evidence="1">
    <location>
        <position position="166"/>
    </location>
    <ligand>
        <name>L-tyrosine</name>
        <dbReference type="ChEBI" id="CHEBI:58315"/>
    </ligand>
</feature>
<feature type="binding site" evidence="1">
    <location>
        <position position="169"/>
    </location>
    <ligand>
        <name>L-tyrosine</name>
        <dbReference type="ChEBI" id="CHEBI:58315"/>
    </ligand>
</feature>
<feature type="binding site" evidence="1">
    <location>
        <position position="184"/>
    </location>
    <ligand>
        <name>L-tyrosine</name>
        <dbReference type="ChEBI" id="CHEBI:58315"/>
    </ligand>
</feature>
<evidence type="ECO:0000250" key="1"/>
<evidence type="ECO:0000305" key="2"/>
<organism>
    <name type="scientific">Vairimorpha ceranae (strain BRL01)</name>
    <name type="common">Microsporidian parasite</name>
    <name type="synonym">Nosema ceranae</name>
    <dbReference type="NCBI Taxonomy" id="578460"/>
    <lineage>
        <taxon>Eukaryota</taxon>
        <taxon>Fungi</taxon>
        <taxon>Fungi incertae sedis</taxon>
        <taxon>Microsporidia</taxon>
        <taxon>Nosematidae</taxon>
        <taxon>Vairimorpha</taxon>
    </lineage>
</organism>
<name>SYYC_VAIC1</name>
<accession>C4V6W1</accession>
<keyword id="KW-0030">Aminoacyl-tRNA synthetase</keyword>
<keyword id="KW-0067">ATP-binding</keyword>
<keyword id="KW-0963">Cytoplasm</keyword>
<keyword id="KW-0436">Ligase</keyword>
<keyword id="KW-0547">Nucleotide-binding</keyword>
<keyword id="KW-0648">Protein biosynthesis</keyword>
<keyword id="KW-1185">Reference proteome</keyword>
<protein>
    <recommendedName>
        <fullName>Probable tyrosine--tRNA ligase, cytoplasmic</fullName>
        <ecNumber>6.1.1.1</ecNumber>
    </recommendedName>
    <alternativeName>
        <fullName>Tyrosyl-tRNA synthetase</fullName>
        <shortName>TyrRS</shortName>
    </alternativeName>
</protein>